<comment type="function">
    <text evidence="1">Allows the formation of correctly charged Asn-tRNA(Asn) or Gln-tRNA(Gln) through the transamidation of misacylated Asp-tRNA(Asn) or Glu-tRNA(Gln) in organisms which lack either or both of asparaginyl-tRNA or glutaminyl-tRNA synthetases. The reaction takes place in the presence of glutamine and ATP through an activated phospho-Asp-tRNA(Asn) or phospho-Glu-tRNA(Gln).</text>
</comment>
<comment type="catalytic activity">
    <reaction evidence="1">
        <text>L-glutamyl-tRNA(Gln) + L-glutamine + ATP + H2O = L-glutaminyl-tRNA(Gln) + L-glutamate + ADP + phosphate + H(+)</text>
        <dbReference type="Rhea" id="RHEA:17521"/>
        <dbReference type="Rhea" id="RHEA-COMP:9681"/>
        <dbReference type="Rhea" id="RHEA-COMP:9684"/>
        <dbReference type="ChEBI" id="CHEBI:15377"/>
        <dbReference type="ChEBI" id="CHEBI:15378"/>
        <dbReference type="ChEBI" id="CHEBI:29985"/>
        <dbReference type="ChEBI" id="CHEBI:30616"/>
        <dbReference type="ChEBI" id="CHEBI:43474"/>
        <dbReference type="ChEBI" id="CHEBI:58359"/>
        <dbReference type="ChEBI" id="CHEBI:78520"/>
        <dbReference type="ChEBI" id="CHEBI:78521"/>
        <dbReference type="ChEBI" id="CHEBI:456216"/>
    </reaction>
</comment>
<comment type="catalytic activity">
    <reaction evidence="1">
        <text>L-aspartyl-tRNA(Asn) + L-glutamine + ATP + H2O = L-asparaginyl-tRNA(Asn) + L-glutamate + ADP + phosphate + 2 H(+)</text>
        <dbReference type="Rhea" id="RHEA:14513"/>
        <dbReference type="Rhea" id="RHEA-COMP:9674"/>
        <dbReference type="Rhea" id="RHEA-COMP:9677"/>
        <dbReference type="ChEBI" id="CHEBI:15377"/>
        <dbReference type="ChEBI" id="CHEBI:15378"/>
        <dbReference type="ChEBI" id="CHEBI:29985"/>
        <dbReference type="ChEBI" id="CHEBI:30616"/>
        <dbReference type="ChEBI" id="CHEBI:43474"/>
        <dbReference type="ChEBI" id="CHEBI:58359"/>
        <dbReference type="ChEBI" id="CHEBI:78515"/>
        <dbReference type="ChEBI" id="CHEBI:78516"/>
        <dbReference type="ChEBI" id="CHEBI:456216"/>
    </reaction>
</comment>
<comment type="subunit">
    <text evidence="1">Heterotrimer of A, B and C subunits.</text>
</comment>
<comment type="similarity">
    <text evidence="1">Belongs to the GatC family.</text>
</comment>
<organism>
    <name type="scientific">Dechloromonas aromatica (strain RCB)</name>
    <dbReference type="NCBI Taxonomy" id="159087"/>
    <lineage>
        <taxon>Bacteria</taxon>
        <taxon>Pseudomonadati</taxon>
        <taxon>Pseudomonadota</taxon>
        <taxon>Betaproteobacteria</taxon>
        <taxon>Rhodocyclales</taxon>
        <taxon>Azonexaceae</taxon>
        <taxon>Dechloromonas</taxon>
    </lineage>
</organism>
<evidence type="ECO:0000255" key="1">
    <source>
        <dbReference type="HAMAP-Rule" id="MF_00122"/>
    </source>
</evidence>
<accession>Q47JV5</accession>
<dbReference type="EC" id="6.3.5.-" evidence="1"/>
<dbReference type="EMBL" id="CP000089">
    <property type="protein sequence ID" value="AAZ44876.1"/>
    <property type="molecule type" value="Genomic_DNA"/>
</dbReference>
<dbReference type="SMR" id="Q47JV5"/>
<dbReference type="STRING" id="159087.Daro_0117"/>
<dbReference type="KEGG" id="dar:Daro_0117"/>
<dbReference type="eggNOG" id="COG0721">
    <property type="taxonomic scope" value="Bacteria"/>
</dbReference>
<dbReference type="HOGENOM" id="CLU_105899_2_2_4"/>
<dbReference type="OrthoDB" id="9794326at2"/>
<dbReference type="GO" id="GO:0050566">
    <property type="term" value="F:asparaginyl-tRNA synthase (glutamine-hydrolyzing) activity"/>
    <property type="evidence" value="ECO:0007669"/>
    <property type="project" value="RHEA"/>
</dbReference>
<dbReference type="GO" id="GO:0005524">
    <property type="term" value="F:ATP binding"/>
    <property type="evidence" value="ECO:0007669"/>
    <property type="project" value="UniProtKB-KW"/>
</dbReference>
<dbReference type="GO" id="GO:0050567">
    <property type="term" value="F:glutaminyl-tRNA synthase (glutamine-hydrolyzing) activity"/>
    <property type="evidence" value="ECO:0007669"/>
    <property type="project" value="UniProtKB-UniRule"/>
</dbReference>
<dbReference type="GO" id="GO:0070681">
    <property type="term" value="P:glutaminyl-tRNAGln biosynthesis via transamidation"/>
    <property type="evidence" value="ECO:0007669"/>
    <property type="project" value="TreeGrafter"/>
</dbReference>
<dbReference type="GO" id="GO:0006450">
    <property type="term" value="P:regulation of translational fidelity"/>
    <property type="evidence" value="ECO:0007669"/>
    <property type="project" value="InterPro"/>
</dbReference>
<dbReference type="GO" id="GO:0006412">
    <property type="term" value="P:translation"/>
    <property type="evidence" value="ECO:0007669"/>
    <property type="project" value="UniProtKB-UniRule"/>
</dbReference>
<dbReference type="Gene3D" id="1.10.20.60">
    <property type="entry name" value="Glu-tRNAGln amidotransferase C subunit, N-terminal domain"/>
    <property type="match status" value="1"/>
</dbReference>
<dbReference type="HAMAP" id="MF_00122">
    <property type="entry name" value="GatC"/>
    <property type="match status" value="1"/>
</dbReference>
<dbReference type="InterPro" id="IPR036113">
    <property type="entry name" value="Asp/Glu-ADT_sf_sub_c"/>
</dbReference>
<dbReference type="InterPro" id="IPR003837">
    <property type="entry name" value="GatC"/>
</dbReference>
<dbReference type="NCBIfam" id="TIGR00135">
    <property type="entry name" value="gatC"/>
    <property type="match status" value="1"/>
</dbReference>
<dbReference type="PANTHER" id="PTHR15004">
    <property type="entry name" value="GLUTAMYL-TRNA(GLN) AMIDOTRANSFERASE SUBUNIT C, MITOCHONDRIAL"/>
    <property type="match status" value="1"/>
</dbReference>
<dbReference type="PANTHER" id="PTHR15004:SF0">
    <property type="entry name" value="GLUTAMYL-TRNA(GLN) AMIDOTRANSFERASE SUBUNIT C, MITOCHONDRIAL"/>
    <property type="match status" value="1"/>
</dbReference>
<dbReference type="Pfam" id="PF02686">
    <property type="entry name" value="GatC"/>
    <property type="match status" value="1"/>
</dbReference>
<dbReference type="SUPFAM" id="SSF141000">
    <property type="entry name" value="Glu-tRNAGln amidotransferase C subunit"/>
    <property type="match status" value="1"/>
</dbReference>
<protein>
    <recommendedName>
        <fullName evidence="1">Aspartyl/glutamyl-tRNA(Asn/Gln) amidotransferase subunit C</fullName>
        <shortName evidence="1">Asp/Glu-ADT subunit C</shortName>
        <ecNumber evidence="1">6.3.5.-</ecNumber>
    </recommendedName>
</protein>
<reference key="1">
    <citation type="journal article" date="2009" name="BMC Genomics">
        <title>Metabolic analysis of the soil microbe Dechloromonas aromatica str. RCB: indications of a surprisingly complex life-style and cryptic anaerobic pathways for aromatic degradation.</title>
        <authorList>
            <person name="Salinero K.K."/>
            <person name="Keller K."/>
            <person name="Feil W.S."/>
            <person name="Feil H."/>
            <person name="Trong S."/>
            <person name="Di Bartolo G."/>
            <person name="Lapidus A."/>
        </authorList>
    </citation>
    <scope>NUCLEOTIDE SEQUENCE [LARGE SCALE GENOMIC DNA]</scope>
    <source>
        <strain>RCB</strain>
    </source>
</reference>
<name>GATC_DECAR</name>
<feature type="chain" id="PRO_1000016114" description="Aspartyl/glutamyl-tRNA(Asn/Gln) amidotransferase subunit C">
    <location>
        <begin position="1"/>
        <end position="95"/>
    </location>
</feature>
<keyword id="KW-0067">ATP-binding</keyword>
<keyword id="KW-0436">Ligase</keyword>
<keyword id="KW-0547">Nucleotide-binding</keyword>
<keyword id="KW-0648">Protein biosynthesis</keyword>
<gene>
    <name evidence="1" type="primary">gatC</name>
    <name type="ordered locus">Daro_0117</name>
</gene>
<sequence>MSLTLEQVKRIAHLARIEISDDEALTTQGHLNGIFQLIEQMQAVDTTGIEPMAHAQDVSQRLREDAVSEGDRRAAYQAVAPEIEAGLYLVPKVIE</sequence>
<proteinExistence type="inferred from homology"/>